<evidence type="ECO:0000256" key="1">
    <source>
        <dbReference type="SAM" id="MobiDB-lite"/>
    </source>
</evidence>
<evidence type="ECO:0000269" key="2">
    <source>
    </source>
</evidence>
<evidence type="ECO:0000269" key="3">
    <source>
    </source>
</evidence>
<evidence type="ECO:0000269" key="4">
    <source>
    </source>
</evidence>
<evidence type="ECO:0000269" key="5">
    <source>
    </source>
</evidence>
<evidence type="ECO:0000269" key="6">
    <source>
    </source>
</evidence>
<evidence type="ECO:0000269" key="7">
    <source>
    </source>
</evidence>
<evidence type="ECO:0000269" key="8">
    <source>
    </source>
</evidence>
<evidence type="ECO:0000269" key="9">
    <source>
    </source>
</evidence>
<evidence type="ECO:0000269" key="10">
    <source>
    </source>
</evidence>
<evidence type="ECO:0000269" key="11">
    <source>
    </source>
</evidence>
<evidence type="ECO:0000269" key="12">
    <source>
    </source>
</evidence>
<evidence type="ECO:0000269" key="13">
    <source>
    </source>
</evidence>
<evidence type="ECO:0000269" key="14">
    <source>
    </source>
</evidence>
<evidence type="ECO:0000269" key="15">
    <source>
    </source>
</evidence>
<evidence type="ECO:0000269" key="16">
    <source>
    </source>
</evidence>
<evidence type="ECO:0000269" key="17">
    <source>
    </source>
</evidence>
<evidence type="ECO:0000269" key="18">
    <source>
    </source>
</evidence>
<evidence type="ECO:0000269" key="19">
    <source>
    </source>
</evidence>
<evidence type="ECO:0000269" key="20">
    <source>
    </source>
</evidence>
<evidence type="ECO:0000269" key="21">
    <source>
    </source>
</evidence>
<evidence type="ECO:0000269" key="22">
    <source>
    </source>
</evidence>
<evidence type="ECO:0000269" key="23">
    <source>
    </source>
</evidence>
<evidence type="ECO:0000269" key="24">
    <source>
    </source>
</evidence>
<evidence type="ECO:0000269" key="25">
    <source>
    </source>
</evidence>
<evidence type="ECO:0000269" key="26">
    <source>
    </source>
</evidence>
<evidence type="ECO:0000269" key="27">
    <source>
    </source>
</evidence>
<evidence type="ECO:0000269" key="28">
    <source>
    </source>
</evidence>
<evidence type="ECO:0000269" key="29">
    <source>
    </source>
</evidence>
<evidence type="ECO:0000269" key="30">
    <source>
    </source>
</evidence>
<evidence type="ECO:0000269" key="31">
    <source>
    </source>
</evidence>
<evidence type="ECO:0000269" key="32">
    <source>
    </source>
</evidence>
<evidence type="ECO:0000269" key="33">
    <source>
    </source>
</evidence>
<evidence type="ECO:0000305" key="34"/>
<evidence type="ECO:0007744" key="35">
    <source>
        <dbReference type="PDB" id="1B3T"/>
    </source>
</evidence>
<evidence type="ECO:0007744" key="36">
    <source>
        <dbReference type="PDB" id="5T7X"/>
    </source>
</evidence>
<evidence type="ECO:0007744" key="37">
    <source>
        <dbReference type="PDB" id="5WMF"/>
    </source>
</evidence>
<evidence type="ECO:0007744" key="38">
    <source>
        <dbReference type="PDB" id="5WUM"/>
    </source>
</evidence>
<evidence type="ECO:0007744" key="39">
    <source>
        <dbReference type="PDB" id="5WUN"/>
    </source>
</evidence>
<evidence type="ECO:0007744" key="40">
    <source>
        <dbReference type="PDB" id="6NPI"/>
    </source>
</evidence>
<evidence type="ECO:0007744" key="41">
    <source>
        <dbReference type="PDB" id="6NPM"/>
    </source>
</evidence>
<evidence type="ECO:0007744" key="42">
    <source>
        <dbReference type="PDB" id="6NPP"/>
    </source>
</evidence>
<evidence type="ECO:0007744" key="43">
    <source>
        <dbReference type="PDB" id="6PW2"/>
    </source>
</evidence>
<evidence type="ECO:0007744" key="44">
    <source>
        <dbReference type="PDB" id="7K7R"/>
    </source>
</evidence>
<evidence type="ECO:0007829" key="45">
    <source>
        <dbReference type="PDB" id="4PRE"/>
    </source>
</evidence>
<evidence type="ECO:0007829" key="46">
    <source>
        <dbReference type="PDB" id="6NPP"/>
    </source>
</evidence>
<evidence type="ECO:0007829" key="47">
    <source>
        <dbReference type="PDB" id="6PW2"/>
    </source>
</evidence>
<evidence type="ECO:0007829" key="48">
    <source>
        <dbReference type="PDB" id="6VH6"/>
    </source>
</evidence>
<evidence type="ECO:0007829" key="49">
    <source>
        <dbReference type="PDB" id="7U1T"/>
    </source>
</evidence>
<evidence type="ECO:0007829" key="50">
    <source>
        <dbReference type="PDB" id="8DLF"/>
    </source>
</evidence>
<comment type="function">
    <text evidence="4 5 8 9 11 14 16 21 22 25 26 30">Responsible for the origin of replication (oriP) dependent replication and maintenance of viral episomes during latent infection (PubMed:15479791, PubMed:2996781). EBNA1 dimer interacts with the DS (dyad symmetry) element within the origin of replication oriP and with a host mitotic chromosome to initiate viral DNA replication during latency (PubMed:24067969, PubMed:2996781, PubMed:31142669, PubMed:8551585). EBNA1 binding to DS recruits the host origin recognition complex (ORC) (PubMed:12953058). Governs the faithful mitotic segregation of the viral episomes by binding both the FR (family of repeats) element within oriP and the host mitotic chromosomes (PubMed:11172042, PubMed:15479791, PubMed:24067969). Forms a cell cycle-dependent tyrosine-dependent DNA cross-link and single-strand cleavage at oriP required for terminating replication and maintaining viral episomes (PubMed:33482082). Counteracts the stabilization of host p53/TP53 by host USP7, thereby decreasing apoptosis and increasing host cell survival (PubMed:15808506). Induces degradation of host PML through the ubiquitin-proteasome system, which promotes lytic reactivation and may impair the host cell DNA repair (PubMed:18833293). Increases the association of CK2 with PML proteins which increases the phosphorylation of PML proteins by CK2, triggering the polyubiquitylation and degradation of PML (PubMed:20719947). Displays inhibitory effects on a SUMO2-modified complex that includes STUB1, KAP1 and USP7 (PubMed:32176739). This inhibitory effect possibly participates to the maintenance of latency linked to PML silencing (PubMed:32176739).</text>
</comment>
<comment type="subunit">
    <text evidence="2 3 7 8 9 11 12 13 14 17 18 19 20 22 24 31 32 33">Homodimer (PubMed:19521517, PubMed:9878348). Dimers can assemble into higher-order oligomers like a homohexamer (PubMed:28701406). Binding to the DS element involves 2 dimers of EBNA1 (PubMed:14506283, PubMed:15808506, PubMed:18833293, PubMed:31142669). Interacts with human USP7; this interaction is independent and simultaneous to EBNA1 interaction with CSNK2B as well as necessary for PML nuclear bodies disruption by EBNA1 (PubMed:14506283, PubMed:15808506, PubMed:18833293, PubMed:20719947, PubMed:24216761). Interacts with host CSNK2B (via KSSR motif); the interaction requires phosphorylation of EBNA1, is independent and simultaneous to EBNA1 interaction with USP7 as well as necessary for PML nuclear bodies disruption by EBNA1. EBNA1, USP7 and CSNK2B form a ternary complex. EBNA1, USP7 and CSNK2B form a ternary complex (PubMed:20719947, PubMed:24216761). Interacts with human EBP2; it is not clear if this interaction is linked with the ability of EBNA1 to associate with host mitotic chromosomes (PubMed:10074103, PubMed:15479791). Interacts with BGLF4; this interaction facilitates the switch from latent to lytic DNA replication by down-regulating EBNA1 replication function (PubMed:19244323). Interacts with human PAX5; this interaction promotes EBNA1-dependent transcription (PubMed:31941781). Interacts with host KPNA1/Importin subunit alpha-5; this interaction allows the nuclear import of EBNA1 (PubMed:10612665). Interacts with host KPNA2/Importin subunit alpha-1; this interaction allows the nuclear import of EBNA1 (PubMed:10612665, PubMed:28104399, PubMed:9020106). Interacts with host C1QBP/P32 (PubMed:9299613). Interacts with host BIRC5/Survivin; this interaction is probably important for EBV episome maintenance in Burkitt's lymphoma host cells (PubMed:28077791).</text>
</comment>
<comment type="interaction">
    <interactant intactId="EBI-996522">
        <id>P03211</id>
    </interactant>
    <interactant intactId="EBI-374847">
        <id>Q13415</id>
        <label>ORC1</label>
    </interactant>
    <organismsDiffer>true</organismsDiffer>
    <experiments>2</experiments>
</comment>
<comment type="interaction">
    <interactant intactId="EBI-996522">
        <id>P03211</id>
    </interactant>
    <interactant intactId="EBI-374957">
        <id>Q13416</id>
        <label>ORC2</label>
    </interactant>
    <organismsDiffer>true</organismsDiffer>
    <experiments>6</experiments>
</comment>
<comment type="interaction">
    <interactant intactId="EBI-996522">
        <id>P03211</id>
    </interactant>
    <interactant intactId="EBI-706637">
        <id>Q15554</id>
        <label>TERF2</label>
    </interactant>
    <organismsDiffer>true</organismsDiffer>
    <experiments>3</experiments>
</comment>
<comment type="interaction">
    <interactant intactId="EBI-996522">
        <id>P03211</id>
    </interactant>
    <interactant intactId="EBI-302474">
        <id>Q93009</id>
        <label>USP7</label>
    </interactant>
    <organismsDiffer>true</organismsDiffer>
    <experiments>5</experiments>
</comment>
<comment type="subcellular location">
    <subcellularLocation>
        <location evidence="14 15 24">Host nucleus</location>
    </subcellularLocation>
</comment>
<comment type="induction">
    <text evidence="34">Expressed during type I latency (proliferating memory B cells and Burkitt lymphoma cells), type II latency (Hodgkin's lymphomas and epithelial cell carcinomas) and type III latency (highly proliferating B cells and immortalized cell lines).</text>
</comment>
<comment type="domain">
    <text evidence="4 6 8 13 16 28">The N-terminus contains the region UR1 that binds zinc and is essential for EBNA1 to activate transcription (PubMed:19521517, PubMed:36037477). This domain dimerizes upon coordinating (PubMed:19521517). The Gly-Gly-Ala repeat region (GAr) inhibits the mRNA translation of EBNA1 in cis and thus prevents MHC-I restricted presentation of EBNA1 epitopes to the host cytotoxic T cells (PubMed:12958359). The chromosome-tethering regions contain Gly-Arg (GR) repeats that function as AT hooks and are involved in EBNA1 stable replication and partition of episomes (PubMed:11172042, PubMed:15479791, PubMed:24067969). The C-terminus DNA binding and dimerization domain (DBD/DD) is required for the viral latent DNA replication (PubMed:36037477).</text>
</comment>
<comment type="PTM">
    <text evidence="19">Phosphorylation at Ser-385 increases the nuclear import efficiency of EBNA1.</text>
</comment>
<comment type="PTM">
    <text evidence="20">Phosphorylation at Ser-393 is required for interaction with CSNK2B.</text>
</comment>
<comment type="miscellaneous">
    <text evidence="23 27">EBNA1 is possibly linked to multiple sclerosis in the host. Antibodies that recognize both EBNA1 and the host protein HEPACAM/GlialCAM can be produced when B cells undergo somatic hypermutations (PubMed:35073561). A mimicry has also been proposed between ANO2 (Anoctamin 2) and EBNA1 (PubMed:31375628).</text>
</comment>
<comment type="similarity">
    <text evidence="34">Belongs to the herpesviridae EBNA1 family.</text>
</comment>
<accession>P03211</accession>
<accession>Q777E1</accession>
<organismHost>
    <name type="scientific">Homo sapiens</name>
    <name type="common">Human</name>
    <dbReference type="NCBI Taxonomy" id="9606"/>
</organismHost>
<protein>
    <recommendedName>
        <fullName>Epstein-Barr nuclear antigen 1</fullName>
        <shortName>EBNA-1</shortName>
        <shortName>EBV nuclear antigen 1</shortName>
        <ecNumber evidence="26">3.1.21.-</ecNumber>
    </recommendedName>
</protein>
<name>EBNA1_EBVB9</name>
<sequence length="641" mass="56427">MSDEGPGTGPGNGLGEKGDTSGPEGSGGSGPQRRGGDNHGRGRGRGRGRGGGRPGAPGGSGSGPRHRDGVRRPQKRPSCIGCKGTHGGTGAGAGAGGAGAGGAGAGGGAGAGGGAGGAGGAGGAGAGGGAGAGGGAGGAGGAGAGGGAGAGGGAGGAGAGGGAGGAGGAGAGGGAGAGGGAGGAGAGGGAGGAGGAGAGGGAGAGGAGGAGGAGAGGAGAGGGAGGAGGAGAGGAGAGGAGAGGAGAGGAGGAGAGGAGGAGAGGAGGAGAGGGAGGAGAGGGAGGAGAGGAGGAGAGGAGGAGAGGAGGAGAGGGAGAGGAGAGGGGRGRGGSGGRGRGGSGGRGRGGSGGRRGRGRERARGGSRERARGRGRGRGEKRPRSPSSQSSSSGSPPRRPPPGRRPFFHPVGEADYFEYHQEGGPDGEPDVPPGAIEQGPADDPGEGPSTGPRGQGDGGRRKKGGWFGKHRGQGGSNPKFENIAEGLRALLARSHVERTTDEGTWVAGVFVYGGSKTSLYNLRRGTALAIPQCRLTPLSRLPFGMAPGPGPQPGPLRESIVCYFMVFLQTHIFAEVLKDAIKDLVMTKPAPTCNIRVTVCSFDDGVDLPPWFPPMVEGAAAEGDDGDDGDEGGDGDEGEEGQE</sequence>
<keyword id="KW-0002">3D-structure</keyword>
<keyword id="KW-0010">Activator</keyword>
<keyword id="KW-0190">Covalent protein-DNA linkage</keyword>
<keyword id="KW-0238">DNA-binding</keyword>
<keyword id="KW-0255">Endonuclease</keyword>
<keyword id="KW-1048">Host nucleus</keyword>
<keyword id="KW-0945">Host-virus interaction</keyword>
<keyword id="KW-0378">Hydrolase</keyword>
<keyword id="KW-1100">Inhibition of host NF-kappa-B by virus</keyword>
<keyword id="KW-0540">Nuclease</keyword>
<keyword id="KW-0597">Phosphoprotein</keyword>
<keyword id="KW-1185">Reference proteome</keyword>
<keyword id="KW-0804">Transcription</keyword>
<keyword id="KW-0805">Transcription regulation</keyword>
<keyword id="KW-1251">Viral latency</keyword>
<keyword id="KW-1276">Viral latency initiation and maintenance</keyword>
<organism>
    <name type="scientific">Epstein-Barr virus (strain B95-8)</name>
    <name type="common">HHV-4</name>
    <name type="synonym">Human herpesvirus 4</name>
    <dbReference type="NCBI Taxonomy" id="10377"/>
    <lineage>
        <taxon>Viruses</taxon>
        <taxon>Duplodnaviria</taxon>
        <taxon>Heunggongvirae</taxon>
        <taxon>Peploviricota</taxon>
        <taxon>Herviviricetes</taxon>
        <taxon>Herpesvirales</taxon>
        <taxon>Orthoherpesviridae</taxon>
        <taxon>Gammaherpesvirinae</taxon>
        <taxon>Lymphocryptovirus</taxon>
        <taxon>Lymphocryptovirus humangamma4</taxon>
        <taxon>Epstein-Barr virus (strain GD1)</taxon>
    </lineage>
</organism>
<reference key="1">
    <citation type="journal article" date="1984" name="Nature">
        <title>DNA sequence and expression of the B95-8 Epstein-Barr virus genome.</title>
        <authorList>
            <person name="Baer R."/>
            <person name="Bankier A.T."/>
            <person name="Biggin M.D."/>
            <person name="Deininger P.L."/>
            <person name="Farrell P.J."/>
            <person name="Gibson T.J."/>
            <person name="Hatfull G."/>
            <person name="Hudson G.S."/>
            <person name="Satchwell S.C."/>
            <person name="Seguin C."/>
            <person name="Tuffnell P.S."/>
            <person name="Barrell B.G."/>
        </authorList>
    </citation>
    <scope>NUCLEOTIDE SEQUENCE [LARGE SCALE GENOMIC DNA]</scope>
</reference>
<reference key="2">
    <citation type="journal article" date="2003" name="Virology">
        <title>Updated Epstein-Barr virus (EBV) DNA sequence and analysis of a promoter for the BART (CST, BARF0) RNAs of EBV.</title>
        <authorList>
            <person name="de Jesus O."/>
            <person name="Smith P.R."/>
            <person name="Spender L.C."/>
            <person name="Elgueta Karstegl C."/>
            <person name="Niller H.H."/>
            <person name="Huang D."/>
            <person name="Farrell P.J."/>
        </authorList>
    </citation>
    <scope>GENOME REANNOTATION</scope>
</reference>
<reference key="3">
    <citation type="journal article" date="1986" name="Proc. Natl. Acad. Sci. U.S.A.">
        <title>Nucleotide sequences of mRNAs encoding Epstein-Barr virus nuclear proteins: a probable transcriptional initiation site.</title>
        <authorList>
            <person name="Sample J."/>
            <person name="Hummel M."/>
            <person name="Braun D."/>
            <person name="Birkenbach M."/>
            <person name="Kieff E."/>
        </authorList>
    </citation>
    <scope>NUCLEOTIDE SEQUENCE [GENOMIC DNA] OF 1-26</scope>
</reference>
<reference key="4">
    <citation type="journal article" date="1985" name="Cell">
        <title>Sequence-specific DNA binding of the Epstein-Barr virus nuclear antigen (EBNA-1) to clustered sites in the plasmid maintenance region.</title>
        <authorList>
            <person name="Rawlins D.R."/>
            <person name="Milman G."/>
            <person name="Hayward S.D."/>
            <person name="Hayward G.S."/>
        </authorList>
    </citation>
    <scope>FUNCTION</scope>
</reference>
<reference key="5">
    <citation type="journal article" date="1990" name="Virology">
        <title>Subnuclear localization and phosphorylation of Epstein-Barr virus latent infection nuclear proteins.</title>
        <authorList>
            <person name="Petti L."/>
            <person name="Sample C."/>
            <person name="Kieff E."/>
        </authorList>
    </citation>
    <scope>SUBCELLULAR LOCATION</scope>
</reference>
<reference key="6">
    <citation type="journal article" date="1991" name="J. Virol.">
        <title>Functional domains of Epstein-Barr virus nuclear antigen EBNA-1.</title>
        <authorList>
            <person name="Ambinder R.F."/>
            <person name="Mullen M.A."/>
            <person name="Chang Y.N."/>
            <person name="Hayward G.S."/>
            <person name="Hayward S.D."/>
        </authorList>
    </citation>
    <scope>NUCLEAR LOCALIZATION SIGNAL</scope>
</reference>
<reference key="7">
    <citation type="journal article" date="1996" name="J. Virol.">
        <title>Cooperative assembly of EBNA1 on the Epstein-Barr virus latent origin of replication.</title>
        <authorList>
            <person name="Summers H."/>
            <person name="Barwell J.A."/>
            <person name="Pfuetzner R.A."/>
            <person name="Edwards A.M."/>
            <person name="Frappier L."/>
        </authorList>
    </citation>
    <scope>FUNCTION</scope>
</reference>
<reference key="8">
    <citation type="journal article" date="1997" name="J. Biol. Chem.">
        <title>Epstein-Barr virus nuclear antigen 1 forms a complex with the nuclear transporter karyopherin alpha2.</title>
        <authorList>
            <person name="Fischer N."/>
            <person name="Kremmer E."/>
            <person name="Lautscham G."/>
            <person name="Mueller-Lantzsch N."/>
            <person name="Graesser F.A."/>
        </authorList>
    </citation>
    <scope>INTERACTION WITH HOST KPNA2/IMPORTIN SUBUNIT ALPHA-1</scope>
</reference>
<reference key="9">
    <citation type="journal article" date="1997" name="Virology">
        <title>P32/TAP, a cellular protein that interacts with EBNA-1 of Epstein-Barr virus.</title>
        <authorList>
            <person name="Wang Y."/>
            <person name="Finan J.E."/>
            <person name="Middeldorp J.M."/>
            <person name="Hayward S.D."/>
        </authorList>
    </citation>
    <scope>INTERACTION WITH HOST C1QBP/P32</scope>
</reference>
<reference key="10">
    <citation type="journal article" date="1999" name="J. Virol.">
        <title>EBP2, a human protein that interacts with sequences of the Epstein-Barr virus nuclear antigen 1 important for plasmid maintenance.</title>
        <authorList>
            <person name="Shire K."/>
            <person name="Ceccarelli D.F.J."/>
            <person name="Avolio-Hunter T.M."/>
            <person name="Frappier L."/>
        </authorList>
    </citation>
    <scope>INTERACTION WITH HOST EBP2</scope>
</reference>
<reference key="11">
    <citation type="journal article" date="2000" name="Virology">
        <title>Epstein-barr virus nuclear antigen-1 binds to nuclear transporter karyopherin alpha1/NPI-1 in addition to karyopherin alpha2/Rch1.</title>
        <authorList>
            <person name="Ito S."/>
            <person name="Ikeda M."/>
            <person name="Kato N."/>
            <person name="Matsumoto A."/>
            <person name="Ishikawa Y."/>
            <person name="Kumakubo S."/>
            <person name="Yanagi K."/>
        </authorList>
    </citation>
    <scope>INTERACTION WITH HOST KPNA2/IMPORTIN SUBUNIT ALPHA-1</scope>
    <scope>INTERACTION WITH HOST KPNA1/IMPORTIN SUBUNIT ALPHA-5</scope>
</reference>
<reference key="12">
    <citation type="journal article" date="2001" name="Proc. Natl. Acad. Sci. U.S.A.">
        <title>Maintenance of Epstein-Barr virus (EBV) oriP-based episomes requires EBV-encoded nuclear antigen-1 chromosome-binding domains, which can be replaced by high-mobility group-I or histone H1.</title>
        <authorList>
            <person name="Hung S.C."/>
            <person name="Kang M.S."/>
            <person name="Kieff E."/>
        </authorList>
    </citation>
    <scope>FUNCTION</scope>
    <scope>DOMAIN</scope>
</reference>
<reference key="13">
    <citation type="journal article" date="2003" name="J. Biol. Chem.">
        <title>Protein interaction domains of the ubiquitin-specific protease, USP7/HAUSP.</title>
        <authorList>
            <person name="Holowaty M.N."/>
            <person name="Sheng Y."/>
            <person name="Nguyen T."/>
            <person name="Arrowsmith C."/>
            <person name="Frappier L."/>
        </authorList>
    </citation>
    <scope>INTERACTION WITH HUMAN USP7</scope>
</reference>
<reference key="14">
    <citation type="journal article" date="2003" name="J. Cell Sci.">
        <title>Complex protein-DNA dynamics at the latent origin of DNA replication of Epstein-Barr virus.</title>
        <authorList>
            <person name="Ritzi M."/>
            <person name="Tillack K."/>
            <person name="Gerhardt J."/>
            <person name="Ott E."/>
            <person name="Humme S."/>
            <person name="Kremmer E."/>
            <person name="Hammerschmidt W."/>
            <person name="Schepers A."/>
        </authorList>
    </citation>
    <scope>FUNCTION</scope>
</reference>
<reference key="15">
    <citation type="journal article" date="2003" name="Science">
        <title>Self-inhibition of synthesis and antigen presentation by Epstein-Barr virus-encoded EBNA1.</title>
        <authorList>
            <person name="Yin Y."/>
            <person name="Manoury B."/>
            <person name="Faahraeus R."/>
        </authorList>
    </citation>
    <scope>DOMAIN</scope>
</reference>
<reference key="16">
    <citation type="journal article" date="2004" name="J. Virol.">
        <title>The amino terminus of Epstein-Barr Virus (EBV) nuclear antigen 1 contains AT hooks that facilitate the replication and partitioning of latent EBV genomes by tethering them to cellular chromosomes.</title>
        <authorList>
            <person name="Sears J."/>
            <person name="Ujihara M."/>
            <person name="Wong S."/>
            <person name="Ott C."/>
            <person name="Middeldorp J."/>
            <person name="Aiyar A."/>
        </authorList>
    </citation>
    <scope>FUNCTION</scope>
    <scope>DOMAIN</scope>
    <scope>INTERACTION WITH HOST EBP2</scope>
</reference>
<reference key="17">
    <citation type="journal article" date="2008" name="PLoS Pathog.">
        <title>Epstein-Barr nuclear antigen 1 contributes to nasopharyngeal carcinoma through disruption of PML nuclear bodies.</title>
        <authorList>
            <person name="Sivachandran N."/>
            <person name="Sarkari F."/>
            <person name="Frappier L."/>
        </authorList>
    </citation>
    <scope>FUNCTION</scope>
</reference>
<reference key="18">
    <citation type="journal article" date="2009" name="J. Virol.">
        <title>Protein array identification of substrates of the epstein-barr virus protein kinase BGLF4.</title>
        <authorList>
            <person name="Zhu J."/>
            <person name="Liao G."/>
            <person name="Shan L."/>
            <person name="Zhang J."/>
            <person name="Chen M.R."/>
            <person name="Hayward G.S."/>
            <person name="Hayward S.D."/>
            <person name="Desai P."/>
            <person name="Zhu H."/>
        </authorList>
    </citation>
    <scope>INTERACTION WITH BGLF4</scope>
</reference>
<reference key="19">
    <citation type="journal article" date="2009" name="PLoS Pathog.">
        <title>Zinc coordination is required for and regulates transcription activation by Epstein-Barr nuclear antigen 1.</title>
        <authorList>
            <person name="Aras S."/>
            <person name="Singh G."/>
            <person name="Johnston K."/>
            <person name="Foster T."/>
            <person name="Aiyar A."/>
        </authorList>
    </citation>
    <scope>FUNCTION</scope>
    <scope>DOMAIN</scope>
    <scope>MUTAGENESIS OF CYS-79 AND CYS-82</scope>
    <scope>SUBUNIT</scope>
</reference>
<reference key="20">
    <citation type="journal article" date="2010" name="J. Virol.">
        <title>Epstein-Barr virus nuclear antigen 1 Hijacks the host kinase CK2 to disrupt PML nuclear bodies.</title>
        <authorList>
            <person name="Sivachandran N."/>
            <person name="Cao J.Y."/>
            <person name="Frappier L."/>
        </authorList>
    </citation>
    <scope>FUNCTION</scope>
    <scope>INTERACTION WITH HOST CSNK2B AND USP7</scope>
    <scope>MUTAGENESIS OF 387-GLN--PRO-394</scope>
    <scope>SUBCELLULAR LOCATION</scope>
</reference>
<reference key="21">
    <citation type="journal article" date="2013" name="J. Virol.">
        <title>Efficient replication of Epstein-Barr virus-derived plasmids requires tethering by EBNA1 to host chromosomes.</title>
        <authorList>
            <person name="Hodin T.L."/>
            <person name="Najrana T."/>
            <person name="Yates J.L."/>
        </authorList>
    </citation>
    <scope>FUNCTION</scope>
    <scope>DOMAIN</scope>
</reference>
<reference key="22">
    <citation type="journal article" date="2014" name="Mol. Cell. Biol.">
        <title>Identification of a novel protein interaction motif in the regulatory subunit of casein kinase 2.</title>
        <authorList>
            <person name="Cao J.Y."/>
            <person name="Shire K."/>
            <person name="Landry C."/>
            <person name="Gish G.D."/>
            <person name="Pawson T."/>
            <person name="Frappier L."/>
        </authorList>
    </citation>
    <scope>INTERACTION WITH HOST CSNK2B AND USP7</scope>
    <scope>PHOSPHORYLATION AT SER-393</scope>
    <scope>MUTAGENESIS OF SER-386; GLN-387; SER-388; SER-390; SER-391; GLY-392; SER-393 AND PRO-394</scope>
</reference>
<reference key="23">
    <citation type="journal article" date="2021" name="Cell">
        <title>Cell-cycle-dependent EBNA1-DNA crosslinking promotes replication termination at oriP and viral episome maintenance.</title>
        <authorList>
            <person name="Dheekollu J."/>
            <person name="Wiedmer A."/>
            <person name="Ayyanathan K."/>
            <person name="Deakyne J.S."/>
            <person name="Messick T.E."/>
            <person name="Lieberman P.M."/>
        </authorList>
    </citation>
    <scope>FUNCTION</scope>
    <scope>MUTAGENESIS OF TYR-518</scope>
    <scope>CATALYTIC ACTIVITY</scope>
</reference>
<reference key="24">
    <citation type="journal article" date="2019" name="Proc. Natl. Acad. Sci. U.S.A.">
        <title>Molecular mimicry between Anoctamin 2 and Epstein-Barr virus nuclear antigen 1 associates with multiple sclerosis risk.</title>
        <authorList>
            <person name="Tengvall K."/>
            <person name="Huang J."/>
            <person name="Hellstroem C."/>
            <person name="Kammer P."/>
            <person name="Bistroem M."/>
            <person name="Ayoglu B."/>
            <person name="Lima Bomfim I."/>
            <person name="Stridh P."/>
            <person name="Butt J."/>
            <person name="Brenner N."/>
            <person name="Michel A."/>
            <person name="Lundberg K."/>
            <person name="Padyukov L."/>
            <person name="Lundberg I.E."/>
            <person name="Svenungsson E."/>
            <person name="Ernberg I."/>
            <person name="Olafsson S."/>
            <person name="Dilthey A.T."/>
            <person name="Hillert J."/>
            <person name="Alfredsson L."/>
            <person name="Sundstroem P."/>
            <person name="Nilsson P."/>
            <person name="Waterboer T."/>
            <person name="Olsson T."/>
            <person name="Kockum I."/>
        </authorList>
    </citation>
    <scope>MOLECULAR MIMICRY WITH HOST ANO2</scope>
</reference>
<reference key="25">
    <citation type="journal article" date="2020" name="PLoS Pathog.">
        <title>STUB1 is targeted by the SUMO-interacting motif of EBNA1 to maintain Epstein-Barr Virus latency.</title>
        <authorList>
            <person name="Wang Y."/>
            <person name="Du S."/>
            <person name="Zhu C."/>
            <person name="Wang C."/>
            <person name="Yu N."/>
            <person name="Lin Z."/>
            <person name="Gan J."/>
            <person name="Guo Y."/>
            <person name="Huang X."/>
            <person name="He Y."/>
            <person name="Robertson E."/>
            <person name="Qu D."/>
            <person name="Wei F."/>
            <person name="Cai Q."/>
        </authorList>
    </citation>
    <scope>FUNCTION</scope>
</reference>
<reference key="26">
    <citation type="journal article" date="2020" name="J. Virol.">
        <title>B Cell-Specific Transcription Activator PAX5 Recruits p300 To Support EBNA1-Driven Transcription.</title>
        <authorList>
            <person name="Liu C.D."/>
            <person name="Lee H.L."/>
            <person name="Peng C.W."/>
        </authorList>
    </citation>
    <scope>FUNCTION</scope>
    <scope>INTERACTION WITH HUMAN PAX5</scope>
    <scope>SUBCELLULAR LOCATION</scope>
</reference>
<reference evidence="35" key="27">
    <citation type="journal article" date="1998" name="J. Mol. Biol.">
        <title>The 2.2 A structure of a permanganate-sensitive DNA site bound by the Epstein-Barr virus origin binding protein, EBNA1.</title>
        <authorList>
            <person name="Bochkarev A."/>
            <person name="Bochkareva E."/>
            <person name="Frappier L."/>
            <person name="Edwards A.M."/>
        </authorList>
    </citation>
    <scope>X-RAY CRYSTALLOGRAPHY (2.20 ANGSTROMS) OF 461-607 IN COMPLEX WITH DNA</scope>
    <scope>SUBUNIT</scope>
    <scope>DNA-BINDING</scope>
</reference>
<reference key="28">
    <citation type="journal article" date="1995" name="Cell">
        <title>Crystal structure of the DNA-binding domain of the Epstein-Barr virus origin-binding protein EBNA 1.</title>
        <authorList>
            <person name="Bochkarev A."/>
            <person name="Barwell J.A."/>
            <person name="Pfuetzner R.A."/>
            <person name="Furey W.F. Jr."/>
            <person name="Edwards A.M."/>
            <person name="Frappier L."/>
        </authorList>
    </citation>
    <scope>X-RAY CRYSTALLOGRAPHY (2.5 ANGSTROMS) OF 469-607</scope>
    <scope>DNA-BINDING</scope>
</reference>
<reference key="29">
    <citation type="journal article" date="2005" name="Mol. Cell">
        <title>Structure of the p53 binding domain of HAUSP/USP7 bound to Epstein-Barr nuclear antigen 1 implications for EBV-mediated immortalization.</title>
        <authorList>
            <person name="Saridakis V."/>
            <person name="Sheng Y."/>
            <person name="Sarkari F."/>
            <person name="Holowaty M.N."/>
            <person name="Shire K."/>
            <person name="Nguyen T."/>
            <person name="Zhang R.G."/>
            <person name="Liao J."/>
            <person name="Lee W."/>
            <person name="Edwards A.M."/>
            <person name="Arrowsmith C.H."/>
            <person name="Frappier L."/>
        </authorList>
    </citation>
    <scope>X-RAY CRYSTALLOGRAPHY (1.7 ANGSTROMS) OF 441-450 IN COMPLEX WITH USP7</scope>
    <scope>FUNCTION</scope>
    <scope>INTERACTION WITH HUMAN USP7</scope>
    <scope>MUTAGENESIS OF GLU-444 AND SER-447</scope>
</reference>
<reference evidence="38 39" key="30">
    <citation type="journal article" date="2017" name="Biochem. Biophys. Res. Commun.">
        <title>Structural basis for the regulation of nuclear import of Epstein-Barr virus nuclear antigen 1 (EBNA1) by phosphorylation of the nuclear localization signal.</title>
        <authorList>
            <person name="Nakada R."/>
            <person name="Hirano H."/>
            <person name="Matsuura Y."/>
        </authorList>
    </citation>
    <scope>X-RAY CRYSTALLOGRAPHY (2.00 ANGSTROMS) OF 378-386 IN COMPLEX WITH KPNA2/IMPORTIN SUBUNIT ALPHA-1</scope>
    <scope>PHOSPHORYLATION AT SER-385</scope>
</reference>
<reference evidence="37" key="31">
    <citation type="journal article" date="2017" name="J. Virol.">
        <title>Structural and Functional Basis for an EBNA1 Hexameric Ring in Epstein-Barr Virus Episome Maintenance.</title>
        <authorList>
            <person name="Deakyne J.S."/>
            <person name="Malecka K.A."/>
            <person name="Messick T.E."/>
            <person name="Lieberman P.M."/>
        </authorList>
    </citation>
    <scope>X-RAY CRYSTALLOGRAPHY (1.90 ANGSTROMS) OF 470-619</scope>
    <scope>SUBUNIT</scope>
    <scope>MUTAGENESIS OF THR-585</scope>
</reference>
<reference evidence="36" key="32">
    <citation type="journal article" date="2017" name="Oncotarget">
        <title>Carcinoma-risk variant of EBNA1 deregulates Epstein-Barr Virus episomal latency.</title>
        <authorList>
            <person name="Dheekollu J."/>
            <person name="Malecka K."/>
            <person name="Wiedmer A."/>
            <person name="Delecluse H.J."/>
            <person name="Chiang A.K."/>
            <person name="Altieri D.C."/>
            <person name="Messick T.E."/>
            <person name="Lieberman P.M."/>
        </authorList>
    </citation>
    <scope>X-RAY CRYSTALLOGRAPHY (2.35 ANGSTROMS) OF 459-607</scope>
    <scope>INTERACTION WITH HOST BIRC5/SURVIVIN</scope>
</reference>
<reference evidence="43" key="33">
    <citation type="journal article" date="2019" name="J. Virol.">
        <title>Structural Basis for Cooperative Binding of EBNA1 to the Epstein-Barr Virus Dyad Symmetry Minimal Origin of Replication.</title>
        <authorList>
            <person name="Malecka K.A."/>
            <person name="Dheekollu J."/>
            <person name="Deakyne J.S."/>
            <person name="Wiedmer A."/>
            <person name="Ramirez U.D."/>
            <person name="Lieberman P.M."/>
            <person name="Messick T.E."/>
        </authorList>
    </citation>
    <scope>X-RAY CRYSTALLOGRAPHY (3.01 ANGSTROMS) OF 461-607</scope>
    <scope>DNA-BINDING</scope>
    <scope>MUTAGENESIS OF ARG-491 AND ASP-581</scope>
</reference>
<reference evidence="40 41 42" key="34">
    <citation type="journal article" date="2019" name="Sci. Transl. Med.">
        <title>Structure-based design of small-molecule inhibitors of EBNA1 DNA binding blocks Epstein-Barr virus latent infection and tumor growth.</title>
        <authorList>
            <person name="Messick T.E."/>
            <person name="Smith G.R."/>
            <person name="Soldan S.S."/>
            <person name="McDonnell M.E."/>
            <person name="Deakyne J.S."/>
            <person name="Malecka K.A."/>
            <person name="Tolvinski L."/>
            <person name="van den Heuvel A.P.J."/>
            <person name="Gu B.W."/>
            <person name="Cassel J.A."/>
            <person name="Tran D.H."/>
            <person name="Wassermann B.R."/>
            <person name="Zhang Y."/>
            <person name="Velvadapu V."/>
            <person name="Zartler E.R."/>
            <person name="Busson P."/>
            <person name="Reitz A.B."/>
            <person name="Lieberman P.M."/>
        </authorList>
    </citation>
    <scope>X-RAY CRYSTALLOGRAPHY (1.35 ANGSTROMS) OF 471-607</scope>
</reference>
<reference evidence="44" key="35">
    <citation type="journal article" date="2022" name="Nature">
        <title>Clonally expanded B cells in multiple sclerosis bind EBV EBNA1 and GlialCAM.</title>
        <authorList>
            <person name="Lanz T.V."/>
            <person name="Brewer R.C."/>
            <person name="Ho P.P."/>
            <person name="Moon J.S."/>
            <person name="Jude K.M."/>
            <person name="Fernandez D."/>
            <person name="Fernandes R.A."/>
            <person name="Gomez A.M."/>
            <person name="Nadj G.S."/>
            <person name="Bartley C.M."/>
            <person name="Schubert R.D."/>
            <person name="Hawes I.A."/>
            <person name="Vazquez S.E."/>
            <person name="Iyer M."/>
            <person name="Zuchero J.B."/>
            <person name="Teegen B."/>
            <person name="Dunn J.E."/>
            <person name="Lock C.B."/>
            <person name="Kipp L.B."/>
            <person name="Cotham V.C."/>
            <person name="Ueberheide B.M."/>
            <person name="Aftab B.T."/>
            <person name="Anderson M.S."/>
            <person name="DeRisi J.L."/>
            <person name="Wilson M.R."/>
            <person name="Bashford-Rogers R.J.M."/>
            <person name="Platten M."/>
            <person name="Garcia K.C."/>
            <person name="Steinman L."/>
            <person name="Robinson W.H."/>
        </authorList>
    </citation>
    <scope>X-RAY CRYSTALLOGRAPHY (2.50 ANGSTROMS) OF 386-405</scope>
    <scope>DISEASE</scope>
</reference>
<reference key="36">
    <citation type="journal article" date="2022" name="J. Virol.">
        <title>Cryo-EM Structure and Functional Studies of EBNA1 Binding to the Family of Repeats and Dyad Symmetry Elements of Epstein-Barr Virus oriP.</title>
        <authorList>
            <person name="Mei Y."/>
            <person name="Messick T.E."/>
            <person name="Dheekollu J."/>
            <person name="Kim H.J."/>
            <person name="Molugu S."/>
            <person name="Munoz L.J.C."/>
            <person name="Moiskeenkova-Bell V."/>
            <person name="Murakami K."/>
            <person name="Lieberman P.M."/>
        </authorList>
    </citation>
    <scope>STRUCTURE BY ELECTRON MICROSCOPY (X.X ANGSTROMS) OF 495-614</scope>
    <scope>DOMAIN</scope>
    <scope>MUTAGENESIS OF 460-LYS-LYS-461</scope>
</reference>
<gene>
    <name type="primary">EBNA1</name>
    <name type="ORF">BKRF1</name>
</gene>
<proteinExistence type="evidence at protein level"/>
<dbReference type="EC" id="3.1.21.-" evidence="26"/>
<dbReference type="EMBL" id="V01555">
    <property type="protein sequence ID" value="CAA24816.1"/>
    <property type="molecule type" value="Genomic_DNA"/>
</dbReference>
<dbReference type="EMBL" id="M13941">
    <property type="protein sequence ID" value="AAA45889.1"/>
    <property type="molecule type" value="Genomic_DNA"/>
</dbReference>
<dbReference type="EMBL" id="AJ507799">
    <property type="protein sequence ID" value="CAD53427.1"/>
    <property type="molecule type" value="Genomic_DNA"/>
</dbReference>
<dbReference type="PIR" id="C43043">
    <property type="entry name" value="QQBE31"/>
</dbReference>
<dbReference type="PDB" id="1B3T">
    <property type="method" value="X-ray"/>
    <property type="resolution" value="2.20 A"/>
    <property type="chains" value="A/B=461-607"/>
</dbReference>
<dbReference type="PDB" id="1VHI">
    <property type="method" value="X-ray"/>
    <property type="resolution" value="2.50 A"/>
    <property type="chains" value="A/B=466-607"/>
</dbReference>
<dbReference type="PDB" id="1YY6">
    <property type="method" value="X-ray"/>
    <property type="resolution" value="1.70 A"/>
    <property type="chains" value="B=441-450"/>
</dbReference>
<dbReference type="PDB" id="2FYY">
    <property type="method" value="X-ray"/>
    <property type="resolution" value="1.50 A"/>
    <property type="chains" value="C=407-417"/>
</dbReference>
<dbReference type="PDB" id="2FZ3">
    <property type="method" value="X-ray"/>
    <property type="resolution" value="1.90 A"/>
    <property type="chains" value="C=407-417"/>
</dbReference>
<dbReference type="PDB" id="3MV7">
    <property type="method" value="X-ray"/>
    <property type="resolution" value="2.00 A"/>
    <property type="chains" value="C=407-417"/>
</dbReference>
<dbReference type="PDB" id="3MV8">
    <property type="method" value="X-ray"/>
    <property type="resolution" value="2.10 A"/>
    <property type="chains" value="C=407-417"/>
</dbReference>
<dbReference type="PDB" id="3MV9">
    <property type="method" value="X-ray"/>
    <property type="resolution" value="2.70 A"/>
    <property type="chains" value="C=407-417"/>
</dbReference>
<dbReference type="PDB" id="4PRA">
    <property type="method" value="X-ray"/>
    <property type="resolution" value="1.85 A"/>
    <property type="chains" value="C=407-417"/>
</dbReference>
<dbReference type="PDB" id="4PRE">
    <property type="method" value="X-ray"/>
    <property type="resolution" value="1.65 A"/>
    <property type="chains" value="C=407-417"/>
</dbReference>
<dbReference type="PDB" id="4PRI">
    <property type="method" value="X-ray"/>
    <property type="resolution" value="2.40 A"/>
    <property type="chains" value="C=407-417"/>
</dbReference>
<dbReference type="PDB" id="4PRP">
    <property type="method" value="X-ray"/>
    <property type="resolution" value="2.50 A"/>
    <property type="chains" value="C=407-417"/>
</dbReference>
<dbReference type="PDB" id="5T7X">
    <property type="method" value="X-ray"/>
    <property type="resolution" value="2.35 A"/>
    <property type="chains" value="A/B=459-607"/>
</dbReference>
<dbReference type="PDB" id="5WMF">
    <property type="method" value="X-ray"/>
    <property type="resolution" value="1.90 A"/>
    <property type="chains" value="A/B/C/D/E/F=470-619"/>
</dbReference>
<dbReference type="PDB" id="5WUM">
    <property type="method" value="X-ray"/>
    <property type="resolution" value="2.00 A"/>
    <property type="chains" value="B/C=378-386"/>
</dbReference>
<dbReference type="PDB" id="5WUN">
    <property type="method" value="X-ray"/>
    <property type="resolution" value="2.20 A"/>
    <property type="chains" value="B/C=378-386"/>
</dbReference>
<dbReference type="PDB" id="6NPI">
    <property type="method" value="X-ray"/>
    <property type="resolution" value="1.50 A"/>
    <property type="chains" value="A/B=471-607"/>
</dbReference>
<dbReference type="PDB" id="6NPM">
    <property type="method" value="X-ray"/>
    <property type="resolution" value="1.60 A"/>
    <property type="chains" value="A/B=471-607"/>
</dbReference>
<dbReference type="PDB" id="6NPP">
    <property type="method" value="X-ray"/>
    <property type="resolution" value="1.35 A"/>
    <property type="chains" value="A=471-607"/>
</dbReference>
<dbReference type="PDB" id="6PW2">
    <property type="method" value="X-ray"/>
    <property type="resolution" value="3.01 A"/>
    <property type="chains" value="A/B/C/D/I/J/K/L=461-607"/>
</dbReference>
<dbReference type="PDB" id="6VH6">
    <property type="method" value="X-ray"/>
    <property type="resolution" value="1.30 A"/>
    <property type="chains" value="A/B=470-607"/>
</dbReference>
<dbReference type="PDB" id="7K7R">
    <property type="method" value="X-ray"/>
    <property type="resolution" value="2.50 A"/>
    <property type="chains" value="C/F=386-405"/>
</dbReference>
<dbReference type="PDB" id="7KE3">
    <property type="method" value="X-ray"/>
    <property type="resolution" value="2.20 A"/>
    <property type="chains" value="A/B/C/D/E/F/G/H/I/J/K/L=407-417"/>
</dbReference>
<dbReference type="PDB" id="7KE5">
    <property type="method" value="X-ray"/>
    <property type="resolution" value="2.80 A"/>
    <property type="chains" value="A/B/C/D/E/F/G/H/I/J/K/L=406-417"/>
</dbReference>
<dbReference type="PDB" id="7U1T">
    <property type="method" value="EM"/>
    <property type="resolution" value="3.30 A"/>
    <property type="chains" value="A/B/C/D=438-615"/>
</dbReference>
<dbReference type="PDB" id="8DLF">
    <property type="method" value="EM"/>
    <property type="resolution" value="3.23 A"/>
    <property type="chains" value="A/B/C/D=458-617"/>
</dbReference>
<dbReference type="PDBsum" id="1B3T"/>
<dbReference type="PDBsum" id="1VHI"/>
<dbReference type="PDBsum" id="1YY6"/>
<dbReference type="PDBsum" id="2FYY"/>
<dbReference type="PDBsum" id="2FZ3"/>
<dbReference type="PDBsum" id="3MV7"/>
<dbReference type="PDBsum" id="3MV8"/>
<dbReference type="PDBsum" id="3MV9"/>
<dbReference type="PDBsum" id="4PRA"/>
<dbReference type="PDBsum" id="4PRE"/>
<dbReference type="PDBsum" id="4PRI"/>
<dbReference type="PDBsum" id="4PRP"/>
<dbReference type="PDBsum" id="5T7X"/>
<dbReference type="PDBsum" id="5WMF"/>
<dbReference type="PDBsum" id="5WUM"/>
<dbReference type="PDBsum" id="5WUN"/>
<dbReference type="PDBsum" id="6NPI"/>
<dbReference type="PDBsum" id="6NPM"/>
<dbReference type="PDBsum" id="6NPP"/>
<dbReference type="PDBsum" id="6PW2"/>
<dbReference type="PDBsum" id="6VH6"/>
<dbReference type="PDBsum" id="7K7R"/>
<dbReference type="PDBsum" id="7KE3"/>
<dbReference type="PDBsum" id="7KE5"/>
<dbReference type="PDBsum" id="7U1T"/>
<dbReference type="PDBsum" id="8DLF"/>
<dbReference type="EMDB" id="EMD-26305"/>
<dbReference type="EMDB" id="EMD-27500"/>
<dbReference type="SMR" id="P03211"/>
<dbReference type="BioGRID" id="971751">
    <property type="interactions" value="205"/>
</dbReference>
<dbReference type="DIP" id="DIP-29054N"/>
<dbReference type="ELM" id="P03211"/>
<dbReference type="IntAct" id="P03211">
    <property type="interactions" value="44"/>
</dbReference>
<dbReference type="MINT" id="P03211"/>
<dbReference type="BindingDB" id="P03211"/>
<dbReference type="ChEMBL" id="CHEMBL1293281"/>
<dbReference type="iPTMnet" id="P03211"/>
<dbReference type="ABCD" id="P03211">
    <property type="antibodies" value="2 sequenced antibodies"/>
</dbReference>
<dbReference type="KEGG" id="vg:3783774"/>
<dbReference type="SIGNOR" id="P03211"/>
<dbReference type="EvolutionaryTrace" id="P03211"/>
<dbReference type="PRO" id="PR:P03211"/>
<dbReference type="Proteomes" id="UP000153037">
    <property type="component" value="Segment"/>
</dbReference>
<dbReference type="GO" id="GO:0075341">
    <property type="term" value="C:host cell PML body"/>
    <property type="evidence" value="ECO:0000314"/>
    <property type="project" value="UniProt"/>
</dbReference>
<dbReference type="GO" id="GO:0003677">
    <property type="term" value="F:DNA binding"/>
    <property type="evidence" value="ECO:0000314"/>
    <property type="project" value="UniProtKB"/>
</dbReference>
<dbReference type="GO" id="GO:0003700">
    <property type="term" value="F:DNA-binding transcription factor activity"/>
    <property type="evidence" value="ECO:0007669"/>
    <property type="project" value="InterPro"/>
</dbReference>
<dbReference type="GO" id="GO:0004519">
    <property type="term" value="F:endonuclease activity"/>
    <property type="evidence" value="ECO:0007669"/>
    <property type="project" value="UniProtKB-KW"/>
</dbReference>
<dbReference type="GO" id="GO:0140767">
    <property type="term" value="F:enzyme-substrate adaptor activity"/>
    <property type="evidence" value="ECO:0000314"/>
    <property type="project" value="UniProt"/>
</dbReference>
<dbReference type="GO" id="GO:0045893">
    <property type="term" value="P:positive regulation of DNA-templated transcription"/>
    <property type="evidence" value="ECO:0007669"/>
    <property type="project" value="InterPro"/>
</dbReference>
<dbReference type="GO" id="GO:0006275">
    <property type="term" value="P:regulation of DNA replication"/>
    <property type="evidence" value="ECO:0007669"/>
    <property type="project" value="InterPro"/>
</dbReference>
<dbReference type="GO" id="GO:0075342">
    <property type="term" value="P:symbiont-mediated disruption of host cell PML body"/>
    <property type="evidence" value="ECO:0000314"/>
    <property type="project" value="UniProt"/>
</dbReference>
<dbReference type="GO" id="GO:0085034">
    <property type="term" value="P:symbiont-mediated suppression of host NF-kappaB cascade"/>
    <property type="evidence" value="ECO:0007669"/>
    <property type="project" value="UniProtKB-KW"/>
</dbReference>
<dbReference type="GO" id="GO:0019042">
    <property type="term" value="P:viral latency"/>
    <property type="evidence" value="ECO:0007669"/>
    <property type="project" value="UniProtKB-KW"/>
</dbReference>
<dbReference type="FunFam" id="3.30.70.390:FF:000001">
    <property type="entry name" value="EBNA1"/>
    <property type="match status" value="1"/>
</dbReference>
<dbReference type="Gene3D" id="3.30.70.390">
    <property type="entry name" value="Epstein Barr virus nuclear antigen-1, DNA-binding domain"/>
    <property type="match status" value="1"/>
</dbReference>
<dbReference type="IDEAL" id="IID90004"/>
<dbReference type="InterPro" id="IPR035975">
    <property type="entry name" value="E2/EBNA1_C_sf"/>
</dbReference>
<dbReference type="InterPro" id="IPR004186">
    <property type="entry name" value="EBNA1_DNA-bd"/>
</dbReference>
<dbReference type="InterPro" id="IPR037007">
    <property type="entry name" value="EBNA1_DNA-bd_sf"/>
</dbReference>
<dbReference type="Pfam" id="PF02905">
    <property type="entry name" value="EBV-NA1"/>
    <property type="match status" value="1"/>
</dbReference>
<dbReference type="PRINTS" id="PR01228">
    <property type="entry name" value="EGGSHELL"/>
</dbReference>
<dbReference type="SUPFAM" id="SSF54957">
    <property type="entry name" value="Viral DNA-binding domain"/>
    <property type="match status" value="1"/>
</dbReference>
<feature type="chain" id="PRO_0000116175" description="Epstein-Barr nuclear antigen 1">
    <location>
        <begin position="1"/>
        <end position="641"/>
    </location>
</feature>
<feature type="region of interest" description="Disordered" evidence="1">
    <location>
        <begin position="1"/>
        <end position="128"/>
    </location>
</feature>
<feature type="region of interest" description="Chromosome-tethering GR1" evidence="4 8">
    <location>
        <begin position="40"/>
        <end position="67"/>
    </location>
</feature>
<feature type="region of interest" description="Interaction with host C1QBP/P32" evidence="32">
    <location>
        <begin position="40"/>
        <end position="60"/>
    </location>
</feature>
<feature type="region of interest" description="UR1" evidence="13">
    <location>
        <begin position="65"/>
        <end position="89"/>
    </location>
</feature>
<feature type="region of interest" description="GAr" evidence="6">
    <location>
        <begin position="90"/>
        <end position="325"/>
    </location>
</feature>
<feature type="region of interest" description="Disordered" evidence="1">
    <location>
        <begin position="224"/>
        <end position="478"/>
    </location>
</feature>
<feature type="region of interest" description="Interaction with host C1QBP/P32" evidence="32">
    <location>
        <begin position="325"/>
        <end position="376"/>
    </location>
</feature>
<feature type="region of interest" description="Chromosome-tethering GR2" evidence="4 8">
    <location>
        <begin position="328"/>
        <end position="378"/>
    </location>
</feature>
<feature type="region of interest" description="Nuclear localization signal" evidence="10">
    <location>
        <begin position="379"/>
        <end position="386"/>
    </location>
</feature>
<feature type="region of interest" description="Interaction with host CSNK2B" evidence="14 17">
    <location>
        <begin position="387"/>
        <end position="395"/>
    </location>
</feature>
<feature type="region of interest" description="Interaction with host USP7">
    <location>
        <begin position="436"/>
        <end position="450"/>
    </location>
</feature>
<feature type="region of interest" description="DBD/DD" evidence="28 29 33">
    <location>
        <begin position="452"/>
        <end position="607"/>
    </location>
</feature>
<feature type="region of interest" description="Disordered" evidence="1">
    <location>
        <begin position="612"/>
        <end position="641"/>
    </location>
</feature>
<feature type="compositionally biased region" description="Gly residues" evidence="1">
    <location>
        <begin position="1"/>
        <end position="15"/>
    </location>
</feature>
<feature type="compositionally biased region" description="Basic residues" evidence="1">
    <location>
        <begin position="41"/>
        <end position="50"/>
    </location>
</feature>
<feature type="compositionally biased region" description="Gly residues" evidence="1">
    <location>
        <begin position="51"/>
        <end position="62"/>
    </location>
</feature>
<feature type="compositionally biased region" description="Gly residues" evidence="1">
    <location>
        <begin position="84"/>
        <end position="128"/>
    </location>
</feature>
<feature type="compositionally biased region" description="Gly residues" evidence="1">
    <location>
        <begin position="224"/>
        <end position="352"/>
    </location>
</feature>
<feature type="compositionally biased region" description="Basic and acidic residues" evidence="1">
    <location>
        <begin position="358"/>
        <end position="381"/>
    </location>
</feature>
<feature type="compositionally biased region" description="Low complexity" evidence="1">
    <location>
        <begin position="383"/>
        <end position="394"/>
    </location>
</feature>
<feature type="compositionally biased region" description="Basic residues" evidence="1">
    <location>
        <begin position="458"/>
        <end position="470"/>
    </location>
</feature>
<feature type="compositionally biased region" description="Acidic residues" evidence="1">
    <location>
        <begin position="620"/>
        <end position="641"/>
    </location>
</feature>
<feature type="active site" description="For site-specific DNA endonuclease activity" evidence="26">
    <location>
        <position position="518"/>
    </location>
</feature>
<feature type="binding site" evidence="28">
    <location>
        <position position="460"/>
    </location>
    <ligand>
        <name>DNA</name>
        <dbReference type="ChEBI" id="CHEBI:16991"/>
    </ligand>
</feature>
<feature type="binding site" evidence="28">
    <location>
        <position position="461"/>
    </location>
    <ligand>
        <name>DNA</name>
        <dbReference type="ChEBI" id="CHEBI:16991"/>
    </ligand>
</feature>
<feature type="binding site" description="covalent" evidence="26">
    <location>
        <position position="518"/>
    </location>
    <ligand>
        <name>DNA</name>
        <dbReference type="ChEBI" id="CHEBI:16991"/>
    </ligand>
</feature>
<feature type="site" description="Interaction dimer-dimer" evidence="22">
    <location>
        <position position="491"/>
    </location>
</feature>
<feature type="site" description="Interaction dimer-dimer. Required for episome maintenance and generation of immortalized B cells in the host" evidence="22 26">
    <location>
        <position position="518"/>
    </location>
</feature>
<feature type="modified residue" description="Phosphoserine" evidence="19">
    <location>
        <position position="385"/>
    </location>
</feature>
<feature type="modified residue" description="Phosphoserine" evidence="20">
    <location>
        <position position="393"/>
    </location>
</feature>
<feature type="mutagenesis site" description="Complete loss of binding to the FR element in oriP." evidence="13">
    <original>CIGC</original>
    <variation>AIGA</variation>
    <location>
        <begin position="79"/>
        <end position="82"/>
    </location>
</feature>
<feature type="mutagenesis site" description="Almost complete loss of transactivation." evidence="13">
    <original>CIGC</original>
    <variation>SIGS</variation>
    <location>
        <begin position="79"/>
        <end position="82"/>
    </location>
</feature>
<feature type="mutagenesis site" description="Decreases interaction with CSNK2B. No effect on interaction with USP7." evidence="17">
    <original>S</original>
    <variation>A</variation>
    <location>
        <position position="386"/>
    </location>
</feature>
<feature type="mutagenesis site" description="Loss of interaction with host CSNK2B. No effect on interaction with USP7. Loss of disruption of PML nuclear bodies." evidence="14">
    <location>
        <begin position="387"/>
        <end position="394"/>
    </location>
</feature>
<feature type="mutagenesis site" description="No effect on interaction with CSNK2B. No effect on interaction with USP7." evidence="17">
    <original>Q</original>
    <variation>A</variation>
    <location>
        <position position="387"/>
    </location>
</feature>
<feature type="mutagenesis site" description="Decreases interaction with CSNK2B. No effect on interaction with USP7." evidence="17">
    <original>S</original>
    <variation>A</variation>
    <location>
        <position position="388"/>
    </location>
</feature>
<feature type="mutagenesis site" description="Decreases interaction with CSNK2B. No effect on interaction with USP7." evidence="17">
    <original>S</original>
    <variation>A</variation>
    <location>
        <position position="390"/>
    </location>
</feature>
<feature type="mutagenesis site" description="Decreases interaction with CSNK2B. No effect on interaction with USP7." evidence="17">
    <original>S</original>
    <variation>A</variation>
    <location>
        <position position="391"/>
    </location>
</feature>
<feature type="mutagenesis site" description="No effect on interaction with CSNK2B. No effect on interaction with USP7." evidence="17">
    <original>G</original>
    <variation>A</variation>
    <location>
        <position position="392"/>
    </location>
</feature>
<feature type="mutagenesis site" description="Loss of interaction with CSNK2B. No effect on interaction with USP7. Loss of phosphorylation. Loss of PML nuclear bodies disruption by EBNA1." evidence="17">
    <original>S</original>
    <variation>A</variation>
    <location>
        <position position="393"/>
    </location>
</feature>
<feature type="mutagenesis site" description="Decreases interaction with CSNK2B. No effect on interaction with USP7." evidence="17">
    <original>S</original>
    <variation>D</variation>
    <location>
        <position position="393"/>
    </location>
</feature>
<feature type="mutagenesis site" description="No effect on interaction with CSNK2B. No effect on interaction with USP7. No effect on PML nuclear bodies disruption by EBNA1." evidence="17">
    <original>S</original>
    <variation>T</variation>
    <location>
        <position position="393"/>
    </location>
</feature>
<feature type="mutagenesis site" description="Decreases interaction with CSNK2B. No effect on interaction with USP7." evidence="17">
    <original>P</original>
    <variation>A</variation>
    <location>
        <position position="394"/>
    </location>
</feature>
<feature type="mutagenesis site" description="Slight decrease in binding to USP7. Major decrease in binding to USP7; when associated with A-447." evidence="9">
    <original>E</original>
    <variation>A</variation>
    <location>
        <position position="444"/>
    </location>
</feature>
<feature type="mutagenesis site" description="Loss of binding to USP7. Major decrease in binding to USP7; when associated with A-444." evidence="9">
    <original>S</original>
    <variation>A</variation>
    <location>
        <position position="447"/>
    </location>
</feature>
<feature type="mutagenesis site" description="Severe loss of oriP-dependent DNA replication; loss of DNA-binding." evidence="28">
    <original>KK</original>
    <variation>AA</variation>
    <location>
        <begin position="460"/>
        <end position="461"/>
    </location>
</feature>
<feature type="mutagenesis site" description="Severe loss of oriP-dependent DNA replication; loss of DNA-binding." evidence="28">
    <original>KK</original>
    <variation>RR</variation>
    <location>
        <begin position="460"/>
        <end position="461"/>
    </location>
</feature>
<feature type="mutagenesis site" description="Impaired cooperative DNA binding." evidence="22">
    <original>R</original>
    <variation>A</variation>
    <location>
        <position position="491"/>
    </location>
</feature>
<feature type="mutagenesis site" description="Loss of DNA replication and cooperative DNA binding." evidence="22">
    <original>R</original>
    <variation>E</variation>
    <location>
        <position position="491"/>
    </location>
</feature>
<feature type="mutagenesis site" description="10 fold decrease in DNA-binding." evidence="26">
    <original>Y</original>
    <variation>A</variation>
    <location>
        <position position="518"/>
    </location>
</feature>
<feature type="mutagenesis site" description="Complete loss of endocucleoase nicks in the DNA." evidence="26">
    <original>Y</original>
    <variation>A</variation>
    <location>
        <position position="518"/>
    </location>
</feature>
<feature type="mutagenesis site" description="Complete loss of DNA-binding." evidence="26">
    <original>Y</original>
    <variation>E</variation>
    <location>
        <position position="518"/>
    </location>
</feature>
<feature type="mutagenesis site" description="No effect on DNA-binding. Complete loss of DNA cross-linking and episome maintenance. Complete loss of endocucleoase nicks in the DNA." evidence="26">
    <original>Y</original>
    <variation>F</variation>
    <location>
        <position position="518"/>
    </location>
</feature>
<feature type="mutagenesis site" description="Loss of DNA replication and cooperative DNA binding." evidence="22">
    <original>D</original>
    <variation>A</variation>
    <location>
        <position position="581"/>
    </location>
</feature>
<feature type="mutagenesis site" description="Forms single dimer binding to DNA." evidence="22">
    <original>D</original>
    <variation>E</variation>
    <location>
        <position position="581"/>
    </location>
</feature>
<feature type="mutagenesis site" description="Decreased EBNA1-DNA binding, formation of functional chromatin, and origin recognition complex recruitment at oriP." evidence="20">
    <original>T</original>
    <variation>P</variation>
    <location>
        <position position="585"/>
    </location>
</feature>
<feature type="helix" evidence="45">
    <location>
        <begin position="411"/>
        <end position="413"/>
    </location>
</feature>
<feature type="strand" evidence="49">
    <location>
        <begin position="442"/>
        <end position="447"/>
    </location>
</feature>
<feature type="strand" evidence="49">
    <location>
        <begin position="449"/>
        <end position="453"/>
    </location>
</feature>
<feature type="helix" evidence="48">
    <location>
        <begin position="477"/>
        <end position="489"/>
    </location>
</feature>
<feature type="strand" evidence="48">
    <location>
        <begin position="503"/>
        <end position="512"/>
    </location>
</feature>
<feature type="helix" evidence="48">
    <location>
        <begin position="514"/>
        <end position="527"/>
    </location>
</feature>
<feature type="strand" evidence="47">
    <location>
        <begin position="531"/>
        <end position="533"/>
    </location>
</feature>
<feature type="strand" evidence="48">
    <location>
        <begin position="537"/>
        <end position="540"/>
    </location>
</feature>
<feature type="strand" evidence="48">
    <location>
        <begin position="542"/>
        <end position="544"/>
    </location>
</feature>
<feature type="strand" evidence="46">
    <location>
        <begin position="545"/>
        <end position="547"/>
    </location>
</feature>
<feature type="helix" evidence="48">
    <location>
        <begin position="552"/>
        <end position="554"/>
    </location>
</feature>
<feature type="strand" evidence="48">
    <location>
        <begin position="556"/>
        <end position="567"/>
    </location>
</feature>
<feature type="helix" evidence="48">
    <location>
        <begin position="569"/>
        <end position="583"/>
    </location>
</feature>
<feature type="helix" evidence="48">
    <location>
        <begin position="590"/>
        <end position="592"/>
    </location>
</feature>
<feature type="strand" evidence="48">
    <location>
        <begin position="593"/>
        <end position="604"/>
    </location>
</feature>
<feature type="helix" evidence="50">
    <location>
        <begin position="613"/>
        <end position="615"/>
    </location>
</feature>